<keyword id="KW-0378">Hydrolase</keyword>
<dbReference type="EC" id="3.6.1.-" evidence="1"/>
<dbReference type="EMBL" id="CP000151">
    <property type="protein sequence ID" value="ABB07272.1"/>
    <property type="molecule type" value="Genomic_DNA"/>
</dbReference>
<dbReference type="RefSeq" id="WP_011350862.1">
    <property type="nucleotide sequence ID" value="NZ_WNDV01000019.1"/>
</dbReference>
<dbReference type="SMR" id="Q39JU4"/>
<dbReference type="KEGG" id="bur:Bcep18194_A3671"/>
<dbReference type="PATRIC" id="fig|482957.22.peg.525"/>
<dbReference type="HOGENOM" id="CLU_087195_0_1_4"/>
<dbReference type="Proteomes" id="UP000002705">
    <property type="component" value="Chromosome 1"/>
</dbReference>
<dbReference type="GO" id="GO:0016462">
    <property type="term" value="F:pyrophosphatase activity"/>
    <property type="evidence" value="ECO:0007669"/>
    <property type="project" value="UniProtKB-ARBA"/>
</dbReference>
<dbReference type="CDD" id="cd03671">
    <property type="entry name" value="NUDIX_Ap4A_hydrolase_plant_like"/>
    <property type="match status" value="1"/>
</dbReference>
<dbReference type="Gene3D" id="3.90.79.10">
    <property type="entry name" value="Nucleoside Triphosphate Pyrophosphohydrolase"/>
    <property type="match status" value="1"/>
</dbReference>
<dbReference type="HAMAP" id="MF_00298">
    <property type="entry name" value="Nudix_RppH"/>
    <property type="match status" value="1"/>
</dbReference>
<dbReference type="InterPro" id="IPR020476">
    <property type="entry name" value="Nudix_hydrolase"/>
</dbReference>
<dbReference type="InterPro" id="IPR015797">
    <property type="entry name" value="NUDIX_hydrolase-like_dom_sf"/>
</dbReference>
<dbReference type="InterPro" id="IPR020084">
    <property type="entry name" value="NUDIX_hydrolase_CS"/>
</dbReference>
<dbReference type="InterPro" id="IPR000086">
    <property type="entry name" value="NUDIX_hydrolase_dom"/>
</dbReference>
<dbReference type="InterPro" id="IPR022927">
    <property type="entry name" value="RppH"/>
</dbReference>
<dbReference type="NCBIfam" id="NF001935">
    <property type="entry name" value="PRK00714.1-2"/>
    <property type="match status" value="1"/>
</dbReference>
<dbReference type="NCBIfam" id="NF001937">
    <property type="entry name" value="PRK00714.1-4"/>
    <property type="match status" value="1"/>
</dbReference>
<dbReference type="NCBIfam" id="NF001938">
    <property type="entry name" value="PRK00714.1-5"/>
    <property type="match status" value="1"/>
</dbReference>
<dbReference type="PANTHER" id="PTHR43736">
    <property type="entry name" value="ADP-RIBOSE PYROPHOSPHATASE"/>
    <property type="match status" value="1"/>
</dbReference>
<dbReference type="PANTHER" id="PTHR43736:SF1">
    <property type="entry name" value="DIHYDRONEOPTERIN TRIPHOSPHATE DIPHOSPHATASE"/>
    <property type="match status" value="1"/>
</dbReference>
<dbReference type="Pfam" id="PF00293">
    <property type="entry name" value="NUDIX"/>
    <property type="match status" value="1"/>
</dbReference>
<dbReference type="PRINTS" id="PR00502">
    <property type="entry name" value="NUDIXFAMILY"/>
</dbReference>
<dbReference type="SUPFAM" id="SSF55811">
    <property type="entry name" value="Nudix"/>
    <property type="match status" value="1"/>
</dbReference>
<dbReference type="PROSITE" id="PS51462">
    <property type="entry name" value="NUDIX"/>
    <property type="match status" value="1"/>
</dbReference>
<dbReference type="PROSITE" id="PS00893">
    <property type="entry name" value="NUDIX_BOX"/>
    <property type="match status" value="1"/>
</dbReference>
<evidence type="ECO:0000255" key="1">
    <source>
        <dbReference type="HAMAP-Rule" id="MF_00298"/>
    </source>
</evidence>
<comment type="function">
    <text evidence="1">Accelerates the degradation of transcripts by removing pyrophosphate from the 5'-end of triphosphorylated RNA, leading to a more labile monophosphorylated state that can stimulate subsequent ribonuclease cleavage.</text>
</comment>
<comment type="cofactor">
    <cofactor evidence="1">
        <name>a divalent metal cation</name>
        <dbReference type="ChEBI" id="CHEBI:60240"/>
    </cofactor>
</comment>
<comment type="similarity">
    <text evidence="1">Belongs to the Nudix hydrolase family. RppH subfamily.</text>
</comment>
<accession>Q39JU4</accession>
<organism>
    <name type="scientific">Burkholderia lata (strain ATCC 17760 / DSM 23089 / LMG 22485 / NCIMB 9086 / R18194 / 383)</name>
    <dbReference type="NCBI Taxonomy" id="482957"/>
    <lineage>
        <taxon>Bacteria</taxon>
        <taxon>Pseudomonadati</taxon>
        <taxon>Pseudomonadota</taxon>
        <taxon>Betaproteobacteria</taxon>
        <taxon>Burkholderiales</taxon>
        <taxon>Burkholderiaceae</taxon>
        <taxon>Burkholderia</taxon>
        <taxon>Burkholderia cepacia complex</taxon>
    </lineage>
</organism>
<proteinExistence type="inferred from homology"/>
<protein>
    <recommendedName>
        <fullName evidence="1">RNA pyrophosphohydrolase</fullName>
        <ecNumber evidence="1">3.6.1.-</ecNumber>
    </recommendedName>
    <alternativeName>
        <fullName evidence="1">(Di)nucleoside polyphosphate hydrolase</fullName>
    </alternativeName>
</protein>
<reference key="1">
    <citation type="submission" date="2005-10" db="EMBL/GenBank/DDBJ databases">
        <title>Complete sequence of chromosome 1 of Burkholderia sp. 383.</title>
        <authorList>
            <consortium name="US DOE Joint Genome Institute"/>
            <person name="Copeland A."/>
            <person name="Lucas S."/>
            <person name="Lapidus A."/>
            <person name="Barry K."/>
            <person name="Detter J.C."/>
            <person name="Glavina T."/>
            <person name="Hammon N."/>
            <person name="Israni S."/>
            <person name="Pitluck S."/>
            <person name="Chain P."/>
            <person name="Malfatti S."/>
            <person name="Shin M."/>
            <person name="Vergez L."/>
            <person name="Schmutz J."/>
            <person name="Larimer F."/>
            <person name="Land M."/>
            <person name="Kyrpides N."/>
            <person name="Lykidis A."/>
            <person name="Richardson P."/>
        </authorList>
    </citation>
    <scope>NUCLEOTIDE SEQUENCE [LARGE SCALE GENOMIC DNA]</scope>
    <source>
        <strain>ATCC 17760 / DSM 23089 / LMG 22485 / NCIMB 9086 / R18194 / 383</strain>
    </source>
</reference>
<gene>
    <name evidence="1" type="primary">rppH</name>
    <name evidence="1" type="synonym">nudH</name>
    <name type="ordered locus">Bcep18194_A3671</name>
</gene>
<sequence>MLDREGFRPNVGIILLNARNEVFWGKRLREHSWQFPQGGIKYGETPMQAMYRELHEETGLHPEHVKIIGRTRDWLRYEVPDKFIKREVRGHYRGQKQIWFLLRMVGRDCDICLRATDHPEFDAWRWNEYWVPLDAVIEFKRDVYQLALTELSRFLRRPAQRAEKPRGPRLSRYPRVIGVQAQQTLTIVDTSVVCSEIEVEASTLDEMPPHVIVGK</sequence>
<name>RPPH_BURL3</name>
<feature type="chain" id="PRO_0000231904" description="RNA pyrophosphohydrolase">
    <location>
        <begin position="1"/>
        <end position="215"/>
    </location>
</feature>
<feature type="domain" description="Nudix hydrolase" evidence="1">
    <location>
        <begin position="6"/>
        <end position="149"/>
    </location>
</feature>
<feature type="short sequence motif" description="Nudix box">
    <location>
        <begin position="38"/>
        <end position="59"/>
    </location>
</feature>